<organism>
    <name type="scientific">Methanocaldococcus jannaschii (strain ATCC 43067 / DSM 2661 / JAL-1 / JCM 10045 / NBRC 100440)</name>
    <name type="common">Methanococcus jannaschii</name>
    <dbReference type="NCBI Taxonomy" id="243232"/>
    <lineage>
        <taxon>Archaea</taxon>
        <taxon>Methanobacteriati</taxon>
        <taxon>Methanobacteriota</taxon>
        <taxon>Methanomada group</taxon>
        <taxon>Methanococci</taxon>
        <taxon>Methanococcales</taxon>
        <taxon>Methanocaldococcaceae</taxon>
        <taxon>Methanocaldococcus</taxon>
    </lineage>
</organism>
<accession>Q58614</accession>
<proteinExistence type="inferred from homology"/>
<feature type="chain" id="PRO_0000107219" description="Putative protein adenylyltransferase MJ1217">
    <location>
        <begin position="1"/>
        <end position="98"/>
    </location>
</feature>
<feature type="short sequence motif" description="GSX(10)DXD motif" evidence="2">
    <location>
        <begin position="31"/>
        <end position="45"/>
    </location>
</feature>
<feature type="binding site" evidence="2">
    <location>
        <position position="43"/>
    </location>
    <ligand>
        <name>Mg(2+)</name>
        <dbReference type="ChEBI" id="CHEBI:18420"/>
        <label>1</label>
    </ligand>
</feature>
<feature type="binding site" evidence="2">
    <location>
        <position position="43"/>
    </location>
    <ligand>
        <name>Mg(2+)</name>
        <dbReference type="ChEBI" id="CHEBI:18420"/>
        <label>2</label>
    </ligand>
</feature>
<feature type="binding site" evidence="2">
    <location>
        <position position="45"/>
    </location>
    <ligand>
        <name>Mg(2+)</name>
        <dbReference type="ChEBI" id="CHEBI:18420"/>
        <label>1</label>
    </ligand>
</feature>
<feature type="binding site" evidence="2">
    <location>
        <position position="45"/>
    </location>
    <ligand>
        <name>Mg(2+)</name>
        <dbReference type="ChEBI" id="CHEBI:18420"/>
        <label>2</label>
    </ligand>
</feature>
<feature type="binding site" evidence="2">
    <location>
        <position position="75"/>
    </location>
    <ligand>
        <name>Mg(2+)</name>
        <dbReference type="ChEBI" id="CHEBI:18420"/>
        <label>1</label>
    </ligand>
</feature>
<reference key="1">
    <citation type="journal article" date="1996" name="Science">
        <title>Complete genome sequence of the methanogenic archaeon, Methanococcus jannaschii.</title>
        <authorList>
            <person name="Bult C.J."/>
            <person name="White O."/>
            <person name="Olsen G.J."/>
            <person name="Zhou L."/>
            <person name="Fleischmann R.D."/>
            <person name="Sutton G.G."/>
            <person name="Blake J.A."/>
            <person name="FitzGerald L.M."/>
            <person name="Clayton R.A."/>
            <person name="Gocayne J.D."/>
            <person name="Kerlavage A.R."/>
            <person name="Dougherty B.A."/>
            <person name="Tomb J.-F."/>
            <person name="Adams M.D."/>
            <person name="Reich C.I."/>
            <person name="Overbeek R."/>
            <person name="Kirkness E.F."/>
            <person name="Weinstock K.G."/>
            <person name="Merrick J.M."/>
            <person name="Glodek A."/>
            <person name="Scott J.L."/>
            <person name="Geoghagen N.S.M."/>
            <person name="Weidman J.F."/>
            <person name="Fuhrmann J.L."/>
            <person name="Nguyen D."/>
            <person name="Utterback T.R."/>
            <person name="Kelley J.M."/>
            <person name="Peterson J.D."/>
            <person name="Sadow P.W."/>
            <person name="Hanna M.C."/>
            <person name="Cotton M.D."/>
            <person name="Roberts K.M."/>
            <person name="Hurst M.A."/>
            <person name="Kaine B.P."/>
            <person name="Borodovsky M."/>
            <person name="Klenk H.-P."/>
            <person name="Fraser C.M."/>
            <person name="Smith H.O."/>
            <person name="Woese C.R."/>
            <person name="Venter J.C."/>
        </authorList>
    </citation>
    <scope>NUCLEOTIDE SEQUENCE [LARGE SCALE GENOMIC DNA]</scope>
    <source>
        <strain>ATCC 43067 / DSM 2661 / JAL-1 / JCM 10045 / NBRC 100440</strain>
    </source>
</reference>
<sequence length="98" mass="11559">MKTLSEIKEILRKHKKILKEKYKVKSIAIFGSYAREEQKETSDIDILIDYYEPISLLKLIELENYLSDLLGIKVDLITKNSIHNPYVKKSIEEDLIYI</sequence>
<comment type="function">
    <text evidence="2">Probable antitoxin component of a putative type VII toxin-antitoxin (TA) system. Neutralizes cognate toxic MJ1216 by di-AMPylation.</text>
</comment>
<comment type="catalytic activity">
    <reaction evidence="2">
        <text>L-tyrosyl-[protein] + ATP = O-(5'-adenylyl)-L-tyrosyl-[protein] + diphosphate</text>
        <dbReference type="Rhea" id="RHEA:54288"/>
        <dbReference type="Rhea" id="RHEA-COMP:10136"/>
        <dbReference type="Rhea" id="RHEA-COMP:13846"/>
        <dbReference type="ChEBI" id="CHEBI:30616"/>
        <dbReference type="ChEBI" id="CHEBI:33019"/>
        <dbReference type="ChEBI" id="CHEBI:46858"/>
        <dbReference type="ChEBI" id="CHEBI:83624"/>
        <dbReference type="EC" id="2.7.7.108"/>
    </reaction>
</comment>
<comment type="catalytic activity">
    <reaction evidence="2">
        <text>O-(5'-adenylyl)-L-tyrosyl-[protein] + ATP = O-[5'-(adenylyl-(5'-&gt;3')-adenylyl)]-L-tyrosyl-[protein] + diphosphate</text>
        <dbReference type="Rhea" id="RHEA:66528"/>
        <dbReference type="Rhea" id="RHEA-COMP:13846"/>
        <dbReference type="Rhea" id="RHEA-COMP:17046"/>
        <dbReference type="ChEBI" id="CHEBI:30616"/>
        <dbReference type="ChEBI" id="CHEBI:33019"/>
        <dbReference type="ChEBI" id="CHEBI:83624"/>
        <dbReference type="ChEBI" id="CHEBI:167160"/>
    </reaction>
</comment>
<comment type="cofactor">
    <cofactor evidence="2">
        <name>Mg(2+)</name>
        <dbReference type="ChEBI" id="CHEBI:18420"/>
    </cofactor>
    <text evidence="2">Binds 2 Mg(2+) ions.</text>
</comment>
<comment type="subunit">
    <text evidence="2">Probably forms a complex with cognate toxin MJ1216.</text>
</comment>
<comment type="similarity">
    <text evidence="3">Belongs to the MntA antitoxin family.</text>
</comment>
<evidence type="ECO:0000250" key="1">
    <source>
        <dbReference type="UniProtKB" id="A0A0B0QJN8"/>
    </source>
</evidence>
<evidence type="ECO:0000250" key="2">
    <source>
        <dbReference type="UniProtKB" id="Q8ECH7"/>
    </source>
</evidence>
<evidence type="ECO:0000305" key="3"/>
<keyword id="KW-0067">ATP-binding</keyword>
<keyword id="KW-0460">Magnesium</keyword>
<keyword id="KW-0479">Metal-binding</keyword>
<keyword id="KW-0547">Nucleotide-binding</keyword>
<keyword id="KW-0548">Nucleotidyltransferase</keyword>
<keyword id="KW-1185">Reference proteome</keyword>
<keyword id="KW-1277">Toxin-antitoxin system</keyword>
<keyword id="KW-0808">Transferase</keyword>
<gene>
    <name type="ordered locus">MJ1217</name>
</gene>
<name>Y1217_METJA</name>
<protein>
    <recommendedName>
        <fullName>Putative protein adenylyltransferase MJ1217</fullName>
        <ecNumber evidence="1">2.7.7.108</ecNumber>
    </recommendedName>
    <alternativeName>
        <fullName>Putative antitoxin MJ1217</fullName>
    </alternativeName>
</protein>
<dbReference type="EC" id="2.7.7.108" evidence="1"/>
<dbReference type="EMBL" id="L77117">
    <property type="protein sequence ID" value="AAB99218.1"/>
    <property type="molecule type" value="Genomic_DNA"/>
</dbReference>
<dbReference type="PIR" id="H64451">
    <property type="entry name" value="H64451"/>
</dbReference>
<dbReference type="RefSeq" id="WP_010870729.1">
    <property type="nucleotide sequence ID" value="NC_000909.1"/>
</dbReference>
<dbReference type="SMR" id="Q58614"/>
<dbReference type="STRING" id="243232.MJ_1217"/>
<dbReference type="PaxDb" id="243232-MJ_1217"/>
<dbReference type="EnsemblBacteria" id="AAB99218">
    <property type="protein sequence ID" value="AAB99218"/>
    <property type="gene ID" value="MJ_1217"/>
</dbReference>
<dbReference type="GeneID" id="1452113"/>
<dbReference type="KEGG" id="mja:MJ_1217"/>
<dbReference type="eggNOG" id="arCOG01206">
    <property type="taxonomic scope" value="Archaea"/>
</dbReference>
<dbReference type="HOGENOM" id="CLU_130257_10_3_2"/>
<dbReference type="InParanoid" id="Q58614"/>
<dbReference type="OrthoDB" id="64953at2157"/>
<dbReference type="PhylomeDB" id="Q58614"/>
<dbReference type="Proteomes" id="UP000000805">
    <property type="component" value="Chromosome"/>
</dbReference>
<dbReference type="GO" id="GO:0005524">
    <property type="term" value="F:ATP binding"/>
    <property type="evidence" value="ECO:0007669"/>
    <property type="project" value="UniProtKB-KW"/>
</dbReference>
<dbReference type="GO" id="GO:0046872">
    <property type="term" value="F:metal ion binding"/>
    <property type="evidence" value="ECO:0007669"/>
    <property type="project" value="UniProtKB-KW"/>
</dbReference>
<dbReference type="GO" id="GO:0016779">
    <property type="term" value="F:nucleotidyltransferase activity"/>
    <property type="evidence" value="ECO:0007669"/>
    <property type="project" value="UniProtKB-KW"/>
</dbReference>
<dbReference type="CDD" id="cd05403">
    <property type="entry name" value="NT_KNTase_like"/>
    <property type="match status" value="1"/>
</dbReference>
<dbReference type="Gene3D" id="3.30.460.10">
    <property type="entry name" value="Beta Polymerase, domain 2"/>
    <property type="match status" value="1"/>
</dbReference>
<dbReference type="InterPro" id="IPR043519">
    <property type="entry name" value="NT_sf"/>
</dbReference>
<dbReference type="InterPro" id="IPR002934">
    <property type="entry name" value="Polymerase_NTP_transf_dom"/>
</dbReference>
<dbReference type="InterPro" id="IPR052038">
    <property type="entry name" value="Type-VII_TA_antitoxin"/>
</dbReference>
<dbReference type="PANTHER" id="PTHR33571:SF19">
    <property type="entry name" value="PROTEIN ADENYLYLTRANSFERASE MJ0128-RELATED"/>
    <property type="match status" value="1"/>
</dbReference>
<dbReference type="PANTHER" id="PTHR33571">
    <property type="entry name" value="SSL8005 PROTEIN"/>
    <property type="match status" value="1"/>
</dbReference>
<dbReference type="Pfam" id="PF01909">
    <property type="entry name" value="NTP_transf_2"/>
    <property type="match status" value="1"/>
</dbReference>
<dbReference type="SUPFAM" id="SSF81301">
    <property type="entry name" value="Nucleotidyltransferase"/>
    <property type="match status" value="1"/>
</dbReference>